<comment type="function">
    <text evidence="3 4 6 7">Phytoglobin that reduces nitrite to nitric oxide (NO) under anoxic conditions (e.g. during flooding or in waterlogged soil) and upon root nodulation (By similarity). Required for general plant development and during nodulation, especially for the onset of symbiosis (By similarity). Monitors nitric oxide (NO) levels during early phase of the nitrogen-fixing symbiosis and buffers oxygen in functioning nodules (By similarity). May not function as an oxygen storage or transport protein (By similarity). Has an unusually high affinity for O(2) through a hexacoordinate heme iron because of a very low dissociation constant (By similarity).</text>
</comment>
<comment type="catalytic activity">
    <reaction evidence="4">
        <text>Fe(III)-heme b-[protein] + nitric oxide + H2O = Fe(II)-heme b-[protein] + nitrite + 2 H(+)</text>
        <dbReference type="Rhea" id="RHEA:77711"/>
        <dbReference type="Rhea" id="RHEA-COMP:18975"/>
        <dbReference type="Rhea" id="RHEA-COMP:18976"/>
        <dbReference type="ChEBI" id="CHEBI:15377"/>
        <dbReference type="ChEBI" id="CHEBI:15378"/>
        <dbReference type="ChEBI" id="CHEBI:16301"/>
        <dbReference type="ChEBI" id="CHEBI:16480"/>
        <dbReference type="ChEBI" id="CHEBI:55376"/>
        <dbReference type="ChEBI" id="CHEBI:60344"/>
    </reaction>
    <physiologicalReaction direction="right-to-left" evidence="4">
        <dbReference type="Rhea" id="RHEA:77713"/>
    </physiologicalReaction>
</comment>
<comment type="cofactor">
    <cofactor evidence="5">
        <name>heme b</name>
        <dbReference type="ChEBI" id="CHEBI:60344"/>
    </cofactor>
    <text evidence="5">Binds 1 heme group per subunit.</text>
</comment>
<comment type="subunit">
    <text evidence="4">Homodimer.</text>
</comment>
<comment type="subcellular location">
    <subcellularLocation>
        <location evidence="2">Cytoplasm</location>
    </subcellularLocation>
    <subcellularLocation>
        <location evidence="2">Nucleus</location>
    </subcellularLocation>
</comment>
<comment type="tissue specificity">
    <text evidence="11">Root nodules.</text>
</comment>
<comment type="similarity">
    <text evidence="10">Belongs to the plant globin family.</text>
</comment>
<dbReference type="EC" id="1.7.2.-" evidence="4"/>
<dbReference type="EMBL" id="X77694">
    <property type="protein sequence ID" value="CAA54774.1"/>
    <property type="molecule type" value="mRNA"/>
</dbReference>
<dbReference type="PIR" id="S42044">
    <property type="entry name" value="S42044"/>
</dbReference>
<dbReference type="SMR" id="Q42665"/>
<dbReference type="GO" id="GO:0005737">
    <property type="term" value="C:cytoplasm"/>
    <property type="evidence" value="ECO:0007669"/>
    <property type="project" value="UniProtKB-SubCell"/>
</dbReference>
<dbReference type="GO" id="GO:0005634">
    <property type="term" value="C:nucleus"/>
    <property type="evidence" value="ECO:0007669"/>
    <property type="project" value="UniProtKB-SubCell"/>
</dbReference>
<dbReference type="GO" id="GO:0020037">
    <property type="term" value="F:heme binding"/>
    <property type="evidence" value="ECO:0007669"/>
    <property type="project" value="InterPro"/>
</dbReference>
<dbReference type="GO" id="GO:0046872">
    <property type="term" value="F:metal ion binding"/>
    <property type="evidence" value="ECO:0007669"/>
    <property type="project" value="UniProtKB-KW"/>
</dbReference>
<dbReference type="GO" id="GO:0016491">
    <property type="term" value="F:oxidoreductase activity"/>
    <property type="evidence" value="ECO:0007669"/>
    <property type="project" value="UniProtKB-KW"/>
</dbReference>
<dbReference type="GO" id="GO:0019825">
    <property type="term" value="F:oxygen binding"/>
    <property type="evidence" value="ECO:0007669"/>
    <property type="project" value="InterPro"/>
</dbReference>
<dbReference type="GO" id="GO:0005344">
    <property type="term" value="F:oxygen carrier activity"/>
    <property type="evidence" value="ECO:0007669"/>
    <property type="project" value="UniProtKB-KW"/>
</dbReference>
<dbReference type="CDD" id="cd08923">
    <property type="entry name" value="class1-2_nsHbs_Lbs"/>
    <property type="match status" value="1"/>
</dbReference>
<dbReference type="Gene3D" id="1.10.490.10">
    <property type="entry name" value="Globins"/>
    <property type="match status" value="1"/>
</dbReference>
<dbReference type="InterPro" id="IPR000971">
    <property type="entry name" value="Globin"/>
</dbReference>
<dbReference type="InterPro" id="IPR009050">
    <property type="entry name" value="Globin-like_sf"/>
</dbReference>
<dbReference type="InterPro" id="IPR012292">
    <property type="entry name" value="Globin/Proto"/>
</dbReference>
<dbReference type="InterPro" id="IPR001032">
    <property type="entry name" value="Leghaemoglobin-like"/>
</dbReference>
<dbReference type="InterPro" id="IPR019824">
    <property type="entry name" value="Leghaemoglobin_Fe_BS"/>
</dbReference>
<dbReference type="PANTHER" id="PTHR22924">
    <property type="entry name" value="LEGHEMOGLOBIN-RELATED"/>
    <property type="match status" value="1"/>
</dbReference>
<dbReference type="PANTHER" id="PTHR22924:SF92">
    <property type="entry name" value="NON-SYMBIOTIC HEMOGLOBIN 2"/>
    <property type="match status" value="1"/>
</dbReference>
<dbReference type="Pfam" id="PF00042">
    <property type="entry name" value="Globin"/>
    <property type="match status" value="1"/>
</dbReference>
<dbReference type="PRINTS" id="PR00188">
    <property type="entry name" value="PLANTGLOBIN"/>
</dbReference>
<dbReference type="SUPFAM" id="SSF46458">
    <property type="entry name" value="Globin-like"/>
    <property type="match status" value="1"/>
</dbReference>
<dbReference type="PROSITE" id="PS01033">
    <property type="entry name" value="GLOBIN"/>
    <property type="match status" value="1"/>
</dbReference>
<dbReference type="PROSITE" id="PS00208">
    <property type="entry name" value="PLANT_GLOBIN"/>
    <property type="match status" value="1"/>
</dbReference>
<keyword id="KW-0963">Cytoplasm</keyword>
<keyword id="KW-0349">Heme</keyword>
<keyword id="KW-0408">Iron</keyword>
<keyword id="KW-0479">Metal-binding</keyword>
<keyword id="KW-0535">Nitrogen fixation</keyword>
<keyword id="KW-0539">Nucleus</keyword>
<keyword id="KW-0560">Oxidoreductase</keyword>
<keyword id="KW-0561">Oxygen transport</keyword>
<keyword id="KW-0813">Transport</keyword>
<feature type="initiator methionine" description="Removed" evidence="1">
    <location>
        <position position="1"/>
    </location>
</feature>
<feature type="chain" id="PRO_0000192979" description="Anaerobic nitrite reductase SYMA">
    <location>
        <begin position="2"/>
        <end position="152"/>
    </location>
</feature>
<feature type="domain" description="Globin" evidence="8">
    <location>
        <begin position="2"/>
        <end position="151"/>
    </location>
</feature>
<feature type="short sequence motif" description="Homodimerization" evidence="4">
    <location>
        <begin position="35"/>
        <end position="39"/>
    </location>
</feature>
<feature type="short sequence motif" description="Homodimerization" evidence="4">
    <location>
        <begin position="105"/>
        <end position="117"/>
    </location>
</feature>
<feature type="binding site" evidence="5">
    <location>
        <position position="45"/>
    </location>
    <ligand>
        <name>heme b</name>
        <dbReference type="ChEBI" id="CHEBI:60344"/>
    </ligand>
</feature>
<feature type="binding site" evidence="4">
    <location>
        <position position="59"/>
    </location>
    <ligand>
        <name>heme b</name>
        <dbReference type="ChEBI" id="CHEBI:60344"/>
    </ligand>
</feature>
<feature type="binding site" description="distal binding residue" evidence="8">
    <location>
        <position position="63"/>
    </location>
    <ligand>
        <name>heme b</name>
        <dbReference type="ChEBI" id="CHEBI:60344"/>
    </ligand>
    <ligandPart>
        <name>Fe</name>
        <dbReference type="ChEBI" id="CHEBI:18248"/>
    </ligandPart>
</feature>
<feature type="binding site" evidence="4">
    <location>
        <position position="93"/>
    </location>
    <ligand>
        <name>heme b</name>
        <dbReference type="ChEBI" id="CHEBI:60344"/>
    </ligand>
</feature>
<feature type="binding site" description="proximal binding residue" evidence="8">
    <location>
        <position position="98"/>
    </location>
    <ligand>
        <name>heme b</name>
        <dbReference type="ChEBI" id="CHEBI:60344"/>
    </ligand>
    <ligandPart>
        <name>Fe</name>
        <dbReference type="ChEBI" id="CHEBI:18248"/>
    </ligandPart>
</feature>
<proteinExistence type="evidence at transcript level"/>
<reference key="1">
    <citation type="submission" date="1994-02" db="EMBL/GenBank/DDBJ databases">
        <title>Symbiotic haemoglobin genes of the Casuarina-Frankia actinorhizal symbiosis.</title>
        <authorList>
            <person name="Jacobbsen-Lyon K."/>
            <person name="Dennis E.S."/>
            <person name="Jensen E.O."/>
            <person name="Marcker K.A."/>
            <person name="Peacock W.P."/>
        </authorList>
    </citation>
    <scope>NUCLEOTIDE SEQUENCE [MRNA]</scope>
    <scope>TISSUE SPECIFICITY</scope>
    <source>
        <tissue>Root nodule</tissue>
    </source>
</reference>
<organism>
    <name type="scientific">Casuarina glauca</name>
    <name type="common">Swamp oak</name>
    <dbReference type="NCBI Taxonomy" id="3522"/>
    <lineage>
        <taxon>Eukaryota</taxon>
        <taxon>Viridiplantae</taxon>
        <taxon>Streptophyta</taxon>
        <taxon>Embryophyta</taxon>
        <taxon>Tracheophyta</taxon>
        <taxon>Spermatophyta</taxon>
        <taxon>Magnoliopsida</taxon>
        <taxon>eudicotyledons</taxon>
        <taxon>Gunneridae</taxon>
        <taxon>Pentapetalae</taxon>
        <taxon>rosids</taxon>
        <taxon>fabids</taxon>
        <taxon>Fagales</taxon>
        <taxon>Casuarinaceae</taxon>
        <taxon>Casuarina</taxon>
    </lineage>
</organism>
<gene>
    <name evidence="9" type="primary">SYMA</name>
</gene>
<sequence>MALTERQEALLKQSWEVLKQNIPGHSLRLFALIIEAAPESKYVFSFLKDSNEIPENNPKLKAHAAVIFKTICESATELRQKGQAVWDNNTLKRLGSIHLKNKITDPHFEVMKGALLGTIKEAVKENWSDEMGCAWTEAYNQLVATIKAEMKE</sequence>
<protein>
    <recommendedName>
        <fullName evidence="4">Anaerobic nitrite reductase SYMA</fullName>
        <ecNumber evidence="4">1.7.2.-</ecNumber>
    </recommendedName>
    <alternativeName>
        <fullName evidence="9">Hemoglobin A</fullName>
    </alternativeName>
</protein>
<evidence type="ECO:0000250" key="1"/>
<evidence type="ECO:0000250" key="2">
    <source>
        <dbReference type="UniProtKB" id="A2XE98"/>
    </source>
</evidence>
<evidence type="ECO:0000250" key="3">
    <source>
        <dbReference type="UniProtKB" id="I3SPW2"/>
    </source>
</evidence>
<evidence type="ECO:0000250" key="4">
    <source>
        <dbReference type="UniProtKB" id="O04986"/>
    </source>
</evidence>
<evidence type="ECO:0000250" key="5">
    <source>
        <dbReference type="UniProtKB" id="P68168"/>
    </source>
</evidence>
<evidence type="ECO:0000250" key="6">
    <source>
        <dbReference type="UniProtKB" id="Q3C1F4"/>
    </source>
</evidence>
<evidence type="ECO:0000250" key="7">
    <source>
        <dbReference type="UniProtKB" id="Q42831"/>
    </source>
</evidence>
<evidence type="ECO:0000255" key="8">
    <source>
        <dbReference type="PROSITE-ProRule" id="PRU00238"/>
    </source>
</evidence>
<evidence type="ECO:0000303" key="9">
    <source ref="1"/>
</evidence>
<evidence type="ECO:0000305" key="10"/>
<evidence type="ECO:0000305" key="11">
    <source ref="1"/>
</evidence>
<accession>Q42665</accession>
<name>HBPA_CASGL</name>